<accession>Q9WTY2</accession>
<accession>Q5D202</accession>
<gene>
    <name type="primary">Rem2</name>
</gene>
<evidence type="ECO:0000250" key="1">
    <source>
        <dbReference type="UniProtKB" id="Q8IYK8"/>
    </source>
</evidence>
<evidence type="ECO:0000256" key="2">
    <source>
        <dbReference type="SAM" id="MobiDB-lite"/>
    </source>
</evidence>
<evidence type="ECO:0000269" key="3">
    <source>
    </source>
</evidence>
<evidence type="ECO:0000305" key="4"/>
<evidence type="ECO:0007744" key="5">
    <source>
    </source>
</evidence>
<evidence type="ECO:0007829" key="6">
    <source>
        <dbReference type="PDB" id="4AII"/>
    </source>
</evidence>
<organism>
    <name type="scientific">Rattus norvegicus</name>
    <name type="common">Rat</name>
    <dbReference type="NCBI Taxonomy" id="10116"/>
    <lineage>
        <taxon>Eukaryota</taxon>
        <taxon>Metazoa</taxon>
        <taxon>Chordata</taxon>
        <taxon>Craniata</taxon>
        <taxon>Vertebrata</taxon>
        <taxon>Euteleostomi</taxon>
        <taxon>Mammalia</taxon>
        <taxon>Eutheria</taxon>
        <taxon>Euarchontoglires</taxon>
        <taxon>Glires</taxon>
        <taxon>Rodentia</taxon>
        <taxon>Myomorpha</taxon>
        <taxon>Muroidea</taxon>
        <taxon>Muridae</taxon>
        <taxon>Murinae</taxon>
        <taxon>Rattus</taxon>
    </lineage>
</organism>
<comment type="function">
    <text evidence="3">Binds GTP saturably and exhibits a low intrinsic rate of GTP hydrolysis.</text>
</comment>
<comment type="subcellular location">
    <subcellularLocation>
        <location evidence="3">Cell membrane</location>
    </subcellularLocation>
</comment>
<comment type="tissue specificity">
    <text evidence="3">Expressed in brain and kidney.</text>
</comment>
<comment type="similarity">
    <text evidence="4">Belongs to the small GTPase superfamily. RGK family.</text>
</comment>
<comment type="sequence caution" evidence="4">
    <conflict type="frameshift">
        <sequence resource="EMBL-CDS" id="AAD34238"/>
    </conflict>
</comment>
<keyword id="KW-0002">3D-structure</keyword>
<keyword id="KW-1003">Cell membrane</keyword>
<keyword id="KW-0342">GTP-binding</keyword>
<keyword id="KW-0472">Membrane</keyword>
<keyword id="KW-0547">Nucleotide-binding</keyword>
<keyword id="KW-0597">Phosphoprotein</keyword>
<keyword id="KW-1185">Reference proteome</keyword>
<dbReference type="EMBL" id="AY916790">
    <property type="protein sequence ID" value="AAX13958.1"/>
    <property type="molecule type" value="mRNA"/>
</dbReference>
<dbReference type="EMBL" id="AF084464">
    <property type="protein sequence ID" value="AAD34238.1"/>
    <property type="status" value="ALT_FRAME"/>
    <property type="molecule type" value="mRNA"/>
</dbReference>
<dbReference type="RefSeq" id="NP_073176.2">
    <property type="nucleotide sequence ID" value="NM_022685.2"/>
</dbReference>
<dbReference type="PDB" id="4AII">
    <property type="method" value="X-ray"/>
    <property type="resolution" value="2.66 A"/>
    <property type="chains" value="A/B=113-283"/>
</dbReference>
<dbReference type="PDBsum" id="4AII"/>
<dbReference type="SMR" id="Q9WTY2"/>
<dbReference type="BioGRID" id="249164">
    <property type="interactions" value="1"/>
</dbReference>
<dbReference type="FunCoup" id="Q9WTY2">
    <property type="interactions" value="180"/>
</dbReference>
<dbReference type="STRING" id="10116.ENSRNOP00000016020"/>
<dbReference type="GlyGen" id="Q9WTY2">
    <property type="glycosylation" value="1 site"/>
</dbReference>
<dbReference type="iPTMnet" id="Q9WTY2"/>
<dbReference type="PhosphoSitePlus" id="Q9WTY2"/>
<dbReference type="PaxDb" id="10116-ENSRNOP00000016020"/>
<dbReference type="ABCD" id="Q9WTY2">
    <property type="antibodies" value="1 sequenced antibody"/>
</dbReference>
<dbReference type="Ensembl" id="ENSRNOT00000016020.7">
    <property type="protein sequence ID" value="ENSRNOP00000016020.4"/>
    <property type="gene ID" value="ENSRNOG00000011646.7"/>
</dbReference>
<dbReference type="GeneID" id="64626"/>
<dbReference type="KEGG" id="rno:64626"/>
<dbReference type="UCSC" id="RGD:69081">
    <property type="organism name" value="rat"/>
</dbReference>
<dbReference type="AGR" id="RGD:69081"/>
<dbReference type="CTD" id="161253"/>
<dbReference type="RGD" id="69081">
    <property type="gene designation" value="Rem2"/>
</dbReference>
<dbReference type="eggNOG" id="KOG0395">
    <property type="taxonomic scope" value="Eukaryota"/>
</dbReference>
<dbReference type="GeneTree" id="ENSGT00940000160062"/>
<dbReference type="HOGENOM" id="CLU_041217_3_1_1"/>
<dbReference type="InParanoid" id="Q9WTY2"/>
<dbReference type="OMA" id="DWPPQAL"/>
<dbReference type="OrthoDB" id="5239715at2759"/>
<dbReference type="PhylomeDB" id="Q9WTY2"/>
<dbReference type="TreeFam" id="TF314379"/>
<dbReference type="EvolutionaryTrace" id="Q9WTY2"/>
<dbReference type="PRO" id="PR:Q9WTY2"/>
<dbReference type="Proteomes" id="UP000002494">
    <property type="component" value="Chromosome 15"/>
</dbReference>
<dbReference type="Bgee" id="ENSRNOG00000011646">
    <property type="expression patterns" value="Expressed in Ammon's horn and 10 other cell types or tissues"/>
</dbReference>
<dbReference type="GO" id="GO:0005886">
    <property type="term" value="C:plasma membrane"/>
    <property type="evidence" value="ECO:0000318"/>
    <property type="project" value="GO_Central"/>
</dbReference>
<dbReference type="GO" id="GO:0005246">
    <property type="term" value="F:calcium channel regulator activity"/>
    <property type="evidence" value="ECO:0000318"/>
    <property type="project" value="GO_Central"/>
</dbReference>
<dbReference type="GO" id="GO:0005525">
    <property type="term" value="F:GTP binding"/>
    <property type="evidence" value="ECO:0000314"/>
    <property type="project" value="RGD"/>
</dbReference>
<dbReference type="GO" id="GO:0003924">
    <property type="term" value="F:GTPase activity"/>
    <property type="evidence" value="ECO:0000314"/>
    <property type="project" value="RGD"/>
</dbReference>
<dbReference type="CDD" id="cd04148">
    <property type="entry name" value="RGK"/>
    <property type="match status" value="1"/>
</dbReference>
<dbReference type="DisProt" id="DP02429"/>
<dbReference type="FunFam" id="3.40.50.300:FF:001032">
    <property type="entry name" value="GTP-binding protein REM 2"/>
    <property type="match status" value="1"/>
</dbReference>
<dbReference type="Gene3D" id="3.40.50.300">
    <property type="entry name" value="P-loop containing nucleotide triphosphate hydrolases"/>
    <property type="match status" value="1"/>
</dbReference>
<dbReference type="InterPro" id="IPR027417">
    <property type="entry name" value="P-loop_NTPase"/>
</dbReference>
<dbReference type="InterPro" id="IPR051641">
    <property type="entry name" value="RGK_GTP-binding_reg"/>
</dbReference>
<dbReference type="InterPro" id="IPR025662">
    <property type="entry name" value="Sigma_54_int_dom_ATP-bd_1"/>
</dbReference>
<dbReference type="InterPro" id="IPR001806">
    <property type="entry name" value="Small_GTPase"/>
</dbReference>
<dbReference type="PANTHER" id="PTHR45775:SF5">
    <property type="entry name" value="GTP-BINDING PROTEIN REM 2"/>
    <property type="match status" value="1"/>
</dbReference>
<dbReference type="PANTHER" id="PTHR45775">
    <property type="entry name" value="RAD, GEM/KIR FAMILY MEMBER 2, ISOFORM C"/>
    <property type="match status" value="1"/>
</dbReference>
<dbReference type="Pfam" id="PF00071">
    <property type="entry name" value="Ras"/>
    <property type="match status" value="1"/>
</dbReference>
<dbReference type="PRINTS" id="PR00449">
    <property type="entry name" value="RASTRNSFRMNG"/>
</dbReference>
<dbReference type="SMART" id="SM00175">
    <property type="entry name" value="RAB"/>
    <property type="match status" value="1"/>
</dbReference>
<dbReference type="SMART" id="SM00173">
    <property type="entry name" value="RAS"/>
    <property type="match status" value="1"/>
</dbReference>
<dbReference type="SMART" id="SM00174">
    <property type="entry name" value="RHO"/>
    <property type="match status" value="1"/>
</dbReference>
<dbReference type="SUPFAM" id="SSF52540">
    <property type="entry name" value="P-loop containing nucleoside triphosphate hydrolases"/>
    <property type="match status" value="1"/>
</dbReference>
<dbReference type="PROSITE" id="PS51421">
    <property type="entry name" value="RAS"/>
    <property type="match status" value="1"/>
</dbReference>
<proteinExistence type="evidence at protein level"/>
<name>REM2_RAT</name>
<sequence length="341" mass="37275">MHTDLDTDMDADTETVALCSSSSRQASPSGTPTPEADTTLLKQKPEKLLAELDRGGPPPAPGVPRRRGSMPVPYKHQLRRAQAVDELDWPPQASSSGSSDSLGSGEAALAQKDGVFKVMLLGESGVGKSTLAGTFGGLQGDNAHEMENSEDTYERRIMVDKEEVTLIVYDIWEQGDAGGWLQDHCLQTGDAFLIVFSVTDRRSFSKVPETLLRLRAGRPHHDLPVILVGNKSDLARSREVSLEEGRHLAGTLSCKHIETSAALHHNTRELFEGAVRQIRLRRGRGHAGGQRPEPSSPDGPAPPTRRESLTKKAKRFLANLVPRNAKFFKQRSRSCHDLSVL</sequence>
<feature type="chain" id="PRO_0000122485" description="GTP-binding protein REM 2">
    <location>
        <begin position="1"/>
        <end position="341"/>
    </location>
</feature>
<feature type="region of interest" description="Disordered" evidence="2">
    <location>
        <begin position="1"/>
        <end position="72"/>
    </location>
</feature>
<feature type="region of interest" description="Disordered" evidence="2">
    <location>
        <begin position="84"/>
        <end position="106"/>
    </location>
</feature>
<feature type="region of interest" description="Disordered" evidence="2">
    <location>
        <begin position="282"/>
        <end position="309"/>
    </location>
</feature>
<feature type="compositionally biased region" description="Acidic residues" evidence="2">
    <location>
        <begin position="1"/>
        <end position="13"/>
    </location>
</feature>
<feature type="compositionally biased region" description="Polar residues" evidence="2">
    <location>
        <begin position="18"/>
        <end position="32"/>
    </location>
</feature>
<feature type="compositionally biased region" description="Basic and acidic residues" evidence="2">
    <location>
        <begin position="43"/>
        <end position="54"/>
    </location>
</feature>
<feature type="compositionally biased region" description="Low complexity" evidence="2">
    <location>
        <begin position="94"/>
        <end position="105"/>
    </location>
</feature>
<feature type="compositionally biased region" description="Pro residues" evidence="2">
    <location>
        <begin position="294"/>
        <end position="303"/>
    </location>
</feature>
<feature type="binding site" evidence="1">
    <location>
        <begin position="122"/>
        <end position="129"/>
    </location>
    <ligand>
        <name>GTP</name>
        <dbReference type="ChEBI" id="CHEBI:37565"/>
    </ligand>
</feature>
<feature type="binding site" evidence="1">
    <location>
        <begin position="230"/>
        <end position="233"/>
    </location>
    <ligand>
        <name>GTP</name>
        <dbReference type="ChEBI" id="CHEBI:37565"/>
    </ligand>
</feature>
<feature type="binding site" evidence="1">
    <location>
        <begin position="261"/>
        <end position="262"/>
    </location>
    <ligand>
        <name>GTP</name>
        <dbReference type="ChEBI" id="CHEBI:37565"/>
    </ligand>
</feature>
<feature type="modified residue" description="Phosphoserine" evidence="5">
    <location>
        <position position="27"/>
    </location>
</feature>
<feature type="modified residue" description="Phosphoserine" evidence="5">
    <location>
        <position position="296"/>
    </location>
</feature>
<feature type="strand" evidence="6">
    <location>
        <begin position="115"/>
        <end position="121"/>
    </location>
</feature>
<feature type="helix" evidence="6">
    <location>
        <begin position="128"/>
        <end position="135"/>
    </location>
</feature>
<feature type="strand" evidence="6">
    <location>
        <begin position="152"/>
        <end position="159"/>
    </location>
</feature>
<feature type="strand" evidence="6">
    <location>
        <begin position="162"/>
        <end position="169"/>
    </location>
</feature>
<feature type="helix" evidence="6">
    <location>
        <begin position="184"/>
        <end position="188"/>
    </location>
</feature>
<feature type="strand" evidence="6">
    <location>
        <begin position="190"/>
        <end position="197"/>
    </location>
</feature>
<feature type="helix" evidence="6">
    <location>
        <begin position="201"/>
        <end position="205"/>
    </location>
</feature>
<feature type="helix" evidence="6">
    <location>
        <begin position="207"/>
        <end position="217"/>
    </location>
</feature>
<feature type="strand" evidence="6">
    <location>
        <begin position="225"/>
        <end position="230"/>
    </location>
</feature>
<feature type="helix" evidence="6">
    <location>
        <begin position="235"/>
        <end position="237"/>
    </location>
</feature>
<feature type="helix" evidence="6">
    <location>
        <begin position="242"/>
        <end position="251"/>
    </location>
</feature>
<feature type="strand" evidence="6">
    <location>
        <begin position="255"/>
        <end position="258"/>
    </location>
</feature>
<feature type="turn" evidence="6">
    <location>
        <begin position="261"/>
        <end position="264"/>
    </location>
</feature>
<feature type="helix" evidence="6">
    <location>
        <begin position="267"/>
        <end position="280"/>
    </location>
</feature>
<reference key="1">
    <citation type="journal article" date="2005" name="J. Neurosci.">
        <title>Expression of Rem2, an RGK family small GTPase, reduces N-type calcium current without affecting channel surface density.</title>
        <authorList>
            <person name="Chen H."/>
            <person name="Puhl H.L."/>
            <person name="Niu S.L."/>
            <person name="Mitchell D.C."/>
            <person name="Ikeda S.R."/>
        </authorList>
    </citation>
    <scope>NUCLEOTIDE SEQUENCE [MRNA]</scope>
    <source>
        <strain>Brown Norway</strain>
        <tissue>Spinal ganglion</tissue>
    </source>
</reference>
<reference key="2">
    <citation type="journal article" date="2000" name="Biochem. J.">
        <title>Rem2, a new member of the Rem/Rad/Gem/Kir family of Ras-related GTPases.</title>
        <authorList>
            <person name="Finlin B.S."/>
            <person name="Shao H."/>
            <person name="Kadono-Okuda K."/>
            <person name="Guo N."/>
            <person name="Andres D.A."/>
        </authorList>
    </citation>
    <scope>NUCLEOTIDE SEQUENCE [MRNA] OF 15-341</scope>
    <scope>FUNCTION</scope>
    <scope>SUBCELLULAR LOCATION</scope>
    <scope>TISSUE SPECIFICITY</scope>
    <scope>GTP-BINDING</scope>
    <source>
        <tissue>Brain</tissue>
    </source>
</reference>
<reference key="3">
    <citation type="journal article" date="2012" name="Nat. Commun.">
        <title>Quantitative maps of protein phosphorylation sites across 14 different rat organs and tissues.</title>
        <authorList>
            <person name="Lundby A."/>
            <person name="Secher A."/>
            <person name="Lage K."/>
            <person name="Nordsborg N.B."/>
            <person name="Dmytriyev A."/>
            <person name="Lundby C."/>
            <person name="Olsen J.V."/>
        </authorList>
    </citation>
    <scope>PHOSPHORYLATION [LARGE SCALE ANALYSIS] AT SER-27 AND SER-296</scope>
    <scope>IDENTIFICATION BY MASS SPECTROMETRY [LARGE SCALE ANALYSIS]</scope>
</reference>
<protein>
    <recommendedName>
        <fullName>GTP-binding protein REM 2</fullName>
    </recommendedName>
    <alternativeName>
        <fullName>Rad and Gem-like GTP-binding protein 2</fullName>
    </alternativeName>
</protein>